<protein>
    <recommendedName>
        <fullName evidence="1">Probable manganese efflux pump MntP</fullName>
    </recommendedName>
</protein>
<gene>
    <name evidence="1" type="primary">mntP</name>
    <name type="synonym">yebN</name>
    <name type="ordered locus">ECDH10B_1959</name>
</gene>
<name>MNTP_ECODH</name>
<reference key="1">
    <citation type="journal article" date="2008" name="J. Bacteriol.">
        <title>The complete genome sequence of Escherichia coli DH10B: insights into the biology of a laboratory workhorse.</title>
        <authorList>
            <person name="Durfee T."/>
            <person name="Nelson R."/>
            <person name="Baldwin S."/>
            <person name="Plunkett G. III"/>
            <person name="Burland V."/>
            <person name="Mau B."/>
            <person name="Petrosino J.F."/>
            <person name="Qin X."/>
            <person name="Muzny D.M."/>
            <person name="Ayele M."/>
            <person name="Gibbs R.A."/>
            <person name="Csorgo B."/>
            <person name="Posfai G."/>
            <person name="Weinstock G.M."/>
            <person name="Blattner F.R."/>
        </authorList>
    </citation>
    <scope>NUCLEOTIDE SEQUENCE [LARGE SCALE GENOMIC DNA]</scope>
    <source>
        <strain>K12 / DH10B</strain>
    </source>
</reference>
<evidence type="ECO:0000255" key="1">
    <source>
        <dbReference type="HAMAP-Rule" id="MF_01521"/>
    </source>
</evidence>
<keyword id="KW-0997">Cell inner membrane</keyword>
<keyword id="KW-1003">Cell membrane</keyword>
<keyword id="KW-0406">Ion transport</keyword>
<keyword id="KW-0464">Manganese</keyword>
<keyword id="KW-0472">Membrane</keyword>
<keyword id="KW-0812">Transmembrane</keyword>
<keyword id="KW-1133">Transmembrane helix</keyword>
<keyword id="KW-0813">Transport</keyword>
<comment type="function">
    <text evidence="1">Probably functions as a manganese efflux pump.</text>
</comment>
<comment type="subcellular location">
    <subcellularLocation>
        <location evidence="1">Cell inner membrane</location>
        <topology evidence="1">Multi-pass membrane protein</topology>
    </subcellularLocation>
</comment>
<comment type="similarity">
    <text evidence="1">Belongs to the MntP (TC 9.B.29) family.</text>
</comment>
<dbReference type="EMBL" id="CP000948">
    <property type="protein sequence ID" value="ACB03018.1"/>
    <property type="molecule type" value="Genomic_DNA"/>
</dbReference>
<dbReference type="RefSeq" id="WP_001296134.1">
    <property type="nucleotide sequence ID" value="NC_010473.1"/>
</dbReference>
<dbReference type="GeneID" id="93776070"/>
<dbReference type="KEGG" id="ecd:ECDH10B_1959"/>
<dbReference type="HOGENOM" id="CLU_096410_0_0_6"/>
<dbReference type="GO" id="GO:0005886">
    <property type="term" value="C:plasma membrane"/>
    <property type="evidence" value="ECO:0007669"/>
    <property type="project" value="UniProtKB-SubCell"/>
</dbReference>
<dbReference type="GO" id="GO:0005384">
    <property type="term" value="F:manganese ion transmembrane transporter activity"/>
    <property type="evidence" value="ECO:0007669"/>
    <property type="project" value="UniProtKB-UniRule"/>
</dbReference>
<dbReference type="HAMAP" id="MF_01521">
    <property type="entry name" value="MntP_pump"/>
    <property type="match status" value="1"/>
</dbReference>
<dbReference type="InterPro" id="IPR003810">
    <property type="entry name" value="Mntp/YtaF"/>
</dbReference>
<dbReference type="InterPro" id="IPR022929">
    <property type="entry name" value="Put_MntP"/>
</dbReference>
<dbReference type="NCBIfam" id="NF008546">
    <property type="entry name" value="PRK11469.1"/>
    <property type="match status" value="1"/>
</dbReference>
<dbReference type="PANTHER" id="PTHR35529">
    <property type="entry name" value="MANGANESE EFFLUX PUMP MNTP-RELATED"/>
    <property type="match status" value="1"/>
</dbReference>
<dbReference type="PANTHER" id="PTHR35529:SF1">
    <property type="entry name" value="MANGANESE EFFLUX PUMP MNTP-RELATED"/>
    <property type="match status" value="1"/>
</dbReference>
<dbReference type="Pfam" id="PF02659">
    <property type="entry name" value="Mntp"/>
    <property type="match status" value="1"/>
</dbReference>
<organism>
    <name type="scientific">Escherichia coli (strain K12 / DH10B)</name>
    <dbReference type="NCBI Taxonomy" id="316385"/>
    <lineage>
        <taxon>Bacteria</taxon>
        <taxon>Pseudomonadati</taxon>
        <taxon>Pseudomonadota</taxon>
        <taxon>Gammaproteobacteria</taxon>
        <taxon>Enterobacterales</taxon>
        <taxon>Enterobacteriaceae</taxon>
        <taxon>Escherichia</taxon>
    </lineage>
</organism>
<proteinExistence type="inferred from homology"/>
<sequence length="188" mass="20117">MNITATVLLAFGMSMDAFAASIGKGATLHKPKFSEALRTGLIFGAVETLTPLIGWGMGMLASRFVLEWNHWIAFVLLIFLGGRMIIEGFRGADDEDEEPRRRHGFWLLVTTAIATSLDAMAVGVGLAFLQVNIIATALAIGCATLIMSTLGMMVGRFIGSIIGKKAEILGGLVLIGIGVQILWTHFHG</sequence>
<feature type="chain" id="PRO_1000200023" description="Probable manganese efflux pump MntP">
    <location>
        <begin position="1"/>
        <end position="188"/>
    </location>
</feature>
<feature type="transmembrane region" description="Helical" evidence="1">
    <location>
        <begin position="3"/>
        <end position="23"/>
    </location>
</feature>
<feature type="transmembrane region" description="Helical" evidence="1">
    <location>
        <begin position="66"/>
        <end position="86"/>
    </location>
</feature>
<feature type="transmembrane region" description="Helical" evidence="1">
    <location>
        <begin position="106"/>
        <end position="128"/>
    </location>
</feature>
<feature type="transmembrane region" description="Helical" evidence="1">
    <location>
        <begin position="143"/>
        <end position="163"/>
    </location>
</feature>
<feature type="transmembrane region" description="Helical" evidence="1">
    <location>
        <begin position="168"/>
        <end position="188"/>
    </location>
</feature>
<accession>B1XH88</accession>